<reference key="1">
    <citation type="journal article" date="1993" name="Mol. Microbiol.">
        <title>Nucleotide sequence and expression of the Pseudomonas aeruginosa algF gene controlling acetylation of alginate.</title>
        <authorList>
            <person name="Shinabarger D."/>
            <person name="May T.B."/>
            <person name="Boyd A."/>
            <person name="Ghosh M."/>
            <person name="Chakrabarty A.M."/>
        </authorList>
    </citation>
    <scope>NUCLEOTIDE SEQUENCE [GENOMIC DNA]</scope>
</reference>
<reference key="2">
    <citation type="journal article" date="1996" name="J. Bacteriol.">
        <title>Identification of algI and algJ in the Pseudomonas aeruginosa alginate biosynthetic gene cluster which are required for alginate O acetylation.</title>
        <authorList>
            <person name="Franklin M.J."/>
            <person name="Ohman D.E."/>
        </authorList>
    </citation>
    <scope>NUCLEOTIDE SEQUENCE [GENOMIC DNA]</scope>
    <source>
        <strain>FRD1</strain>
    </source>
</reference>
<reference key="3">
    <citation type="journal article" date="2000" name="Nature">
        <title>Complete genome sequence of Pseudomonas aeruginosa PAO1, an opportunistic pathogen.</title>
        <authorList>
            <person name="Stover C.K."/>
            <person name="Pham X.-Q.T."/>
            <person name="Erwin A.L."/>
            <person name="Mizoguchi S.D."/>
            <person name="Warrener P."/>
            <person name="Hickey M.J."/>
            <person name="Brinkman F.S.L."/>
            <person name="Hufnagle W.O."/>
            <person name="Kowalik D.J."/>
            <person name="Lagrou M."/>
            <person name="Garber R.L."/>
            <person name="Goltry L."/>
            <person name="Tolentino E."/>
            <person name="Westbrock-Wadman S."/>
            <person name="Yuan Y."/>
            <person name="Brody L.L."/>
            <person name="Coulter S.N."/>
            <person name="Folger K.R."/>
            <person name="Kas A."/>
            <person name="Larbig K."/>
            <person name="Lim R.M."/>
            <person name="Smith K.A."/>
            <person name="Spencer D.H."/>
            <person name="Wong G.K.-S."/>
            <person name="Wu Z."/>
            <person name="Paulsen I.T."/>
            <person name="Reizer J."/>
            <person name="Saier M.H. Jr."/>
            <person name="Hancock R.E.W."/>
            <person name="Lory S."/>
            <person name="Olson M.V."/>
        </authorList>
    </citation>
    <scope>NUCLEOTIDE SEQUENCE [LARGE SCALE GENOMIC DNA]</scope>
    <source>
        <strain>ATCC 15692 / DSM 22644 / CIP 104116 / JCM 14847 / LMG 12228 / 1C / PRS 101 / PAO1</strain>
    </source>
</reference>
<reference key="4">
    <citation type="journal article" date="2002" name="J. Bacteriol.">
        <title>Mutant analysis and cellular localization of the AlgI, AlgJ, and AlgF proteins required for O acetylation of alginate in Pseudomonas aeruginosa.</title>
        <authorList>
            <person name="Franklin M.J."/>
            <person name="Ohman D.E."/>
        </authorList>
    </citation>
    <scope>SUBCELLULAR LOCATION</scope>
    <source>
        <strain>FRD1</strain>
    </source>
</reference>
<protein>
    <recommendedName>
        <fullName>Alginate biosynthesis protein AlgF</fullName>
    </recommendedName>
</protein>
<name>ALGF_PSEAE</name>
<evidence type="ECO:0000255" key="1"/>
<evidence type="ECO:0000269" key="2">
    <source>
    </source>
</evidence>
<evidence type="ECO:0000305" key="3"/>
<evidence type="ECO:0007829" key="4">
    <source>
        <dbReference type="PDB" id="6CZT"/>
    </source>
</evidence>
<gene>
    <name type="primary">algF</name>
    <name type="ordered locus">PA3550</name>
</gene>
<feature type="signal peptide" evidence="1">
    <location>
        <begin position="1"/>
        <end position="28"/>
    </location>
</feature>
<feature type="chain" id="PRO_0000001115" description="Alginate biosynthesis protein AlgF">
    <location>
        <begin position="29"/>
        <end position="216"/>
    </location>
</feature>
<feature type="sequence conflict" description="In Ref. 1; AAD15231." evidence="3" ref="1">
    <original>T</original>
    <variation>N</variation>
    <location>
        <position position="11"/>
    </location>
</feature>
<feature type="strand" evidence="4">
    <location>
        <begin position="43"/>
        <end position="49"/>
    </location>
</feature>
<feature type="strand" evidence="4">
    <location>
        <begin position="51"/>
        <end position="53"/>
    </location>
</feature>
<feature type="strand" evidence="4">
    <location>
        <begin position="57"/>
        <end position="59"/>
    </location>
</feature>
<feature type="strand" evidence="4">
    <location>
        <begin position="72"/>
        <end position="79"/>
    </location>
</feature>
<feature type="strand" evidence="4">
    <location>
        <begin position="85"/>
        <end position="87"/>
    </location>
</feature>
<feature type="strand" evidence="4">
    <location>
        <begin position="90"/>
        <end position="92"/>
    </location>
</feature>
<feature type="strand" evidence="4">
    <location>
        <begin position="100"/>
        <end position="106"/>
    </location>
</feature>
<feature type="strand" evidence="4">
    <location>
        <begin position="113"/>
        <end position="117"/>
    </location>
</feature>
<accession>Q06062</accession>
<accession>Q51394</accession>
<comment type="function">
    <text>Together with AlgI and AlgJ, forms an inner membrane complex which probably interacts with the alginate polymerization-transport complex and adds acetyl groups at the O-2 and O-3 positions of mannuronate residues. Acetylation of alginate is important for the architecture of biofilms and increases resistance to opsonic killing in the host.</text>
</comment>
<comment type="pathway">
    <text>Glycan biosynthesis; alginate biosynthesis.</text>
</comment>
<comment type="subcellular location">
    <subcellularLocation>
        <location evidence="2">Periplasm</location>
    </subcellularLocation>
</comment>
<comment type="similarity">
    <text evidence="3">Belongs to the AlgF family.</text>
</comment>
<sequence length="216" mass="22834">MNPMTRRHTWTRLACALSLGVAAFAAQADEGALYGPQAPKGSAFVRAYNAGNSELDVSVGSTSLNDVAPLGSSDFKFLPPGSYTAQVGQQSLPVKLDPDSYYTLVSQPGGKPQLVAEPPFKNKQKALVRVQNLSGSKLTLKTADGKTDVVKDVGPQSHGDREINPVKVNLALFDGSKKVSDLKPVTLARGEVVCLYVTGSGGKLAPVWVKRPVKAD</sequence>
<dbReference type="EMBL" id="L13026">
    <property type="protein sequence ID" value="AAD15231.1"/>
    <property type="molecule type" value="Genomic_DNA"/>
</dbReference>
<dbReference type="EMBL" id="U50202">
    <property type="protein sequence ID" value="AAB09783.1"/>
    <property type="molecule type" value="Genomic_DNA"/>
</dbReference>
<dbReference type="EMBL" id="AE004091">
    <property type="protein sequence ID" value="AAG06938.1"/>
    <property type="molecule type" value="Genomic_DNA"/>
</dbReference>
<dbReference type="PIR" id="A83201">
    <property type="entry name" value="A83201"/>
</dbReference>
<dbReference type="PIR" id="S37351">
    <property type="entry name" value="S37351"/>
</dbReference>
<dbReference type="RefSeq" id="NP_252240.1">
    <property type="nucleotide sequence ID" value="NC_002516.2"/>
</dbReference>
<dbReference type="RefSeq" id="WP_003092112.1">
    <property type="nucleotide sequence ID" value="NZ_QZGE01000001.1"/>
</dbReference>
<dbReference type="PDB" id="6CZT">
    <property type="method" value="NMR"/>
    <property type="chains" value="A=30-216"/>
</dbReference>
<dbReference type="PDB" id="6D10">
    <property type="method" value="Other"/>
    <property type="chains" value="A=30-216"/>
</dbReference>
<dbReference type="PDBsum" id="6CZT"/>
<dbReference type="PDBsum" id="6D10"/>
<dbReference type="SMR" id="Q06062"/>
<dbReference type="STRING" id="208964.PA3550"/>
<dbReference type="PaxDb" id="208964-PA3550"/>
<dbReference type="DNASU" id="878717"/>
<dbReference type="GeneID" id="878717"/>
<dbReference type="KEGG" id="pae:PA3550"/>
<dbReference type="PATRIC" id="fig|208964.12.peg.3715"/>
<dbReference type="PseudoCAP" id="PA3550"/>
<dbReference type="HOGENOM" id="CLU_112428_0_0_6"/>
<dbReference type="InParanoid" id="Q06062"/>
<dbReference type="OrthoDB" id="7000405at2"/>
<dbReference type="PhylomeDB" id="Q06062"/>
<dbReference type="BioCyc" id="MetaCyc:MONOMER-19200"/>
<dbReference type="BioCyc" id="PAER208964:G1FZ6-3618-MONOMER"/>
<dbReference type="UniPathway" id="UPA00286"/>
<dbReference type="Proteomes" id="UP000002438">
    <property type="component" value="Chromosome"/>
</dbReference>
<dbReference type="GO" id="GO:0042597">
    <property type="term" value="C:periplasmic space"/>
    <property type="evidence" value="ECO:0007669"/>
    <property type="project" value="UniProtKB-SubCell"/>
</dbReference>
<dbReference type="GO" id="GO:0051979">
    <property type="term" value="P:alginic acid acetylation"/>
    <property type="evidence" value="ECO:0000314"/>
    <property type="project" value="PseudoCAP"/>
</dbReference>
<dbReference type="GO" id="GO:0042121">
    <property type="term" value="P:alginic acid biosynthetic process"/>
    <property type="evidence" value="ECO:0007669"/>
    <property type="project" value="UniProtKB-UniPathway"/>
</dbReference>
<dbReference type="InterPro" id="IPR035422">
    <property type="entry name" value="AlgF"/>
</dbReference>
<dbReference type="Pfam" id="PF11182">
    <property type="entry name" value="AlgF"/>
    <property type="match status" value="1"/>
</dbReference>
<proteinExistence type="evidence at protein level"/>
<keyword id="KW-0002">3D-structure</keyword>
<keyword id="KW-0016">Alginate biosynthesis</keyword>
<keyword id="KW-0574">Periplasm</keyword>
<keyword id="KW-1185">Reference proteome</keyword>
<keyword id="KW-0732">Signal</keyword>
<organism>
    <name type="scientific">Pseudomonas aeruginosa (strain ATCC 15692 / DSM 22644 / CIP 104116 / JCM 14847 / LMG 12228 / 1C / PRS 101 / PAO1)</name>
    <dbReference type="NCBI Taxonomy" id="208964"/>
    <lineage>
        <taxon>Bacteria</taxon>
        <taxon>Pseudomonadati</taxon>
        <taxon>Pseudomonadota</taxon>
        <taxon>Gammaproteobacteria</taxon>
        <taxon>Pseudomonadales</taxon>
        <taxon>Pseudomonadaceae</taxon>
        <taxon>Pseudomonas</taxon>
    </lineage>
</organism>